<comment type="function">
    <text evidence="1">One of two assembly initiator proteins, it binds directly to the 5'-end of the 23S rRNA, where it nucleates assembly of the 50S subunit.</text>
</comment>
<comment type="function">
    <text evidence="1">One of the proteins that surrounds the polypeptide exit tunnel on the outside of the subunit.</text>
</comment>
<comment type="subunit">
    <text evidence="1">Part of the 50S ribosomal subunit.</text>
</comment>
<comment type="similarity">
    <text evidence="1">Belongs to the universal ribosomal protein uL24 family.</text>
</comment>
<gene>
    <name evidence="1" type="primary">rplX</name>
    <name type="ordered locus">Daud_0236</name>
</gene>
<organism>
    <name type="scientific">Desulforudis audaxviator (strain MP104C)</name>
    <dbReference type="NCBI Taxonomy" id="477974"/>
    <lineage>
        <taxon>Bacteria</taxon>
        <taxon>Bacillati</taxon>
        <taxon>Bacillota</taxon>
        <taxon>Clostridia</taxon>
        <taxon>Thermoanaerobacterales</taxon>
        <taxon>Candidatus Desulforudaceae</taxon>
        <taxon>Candidatus Desulforudis</taxon>
    </lineage>
</organism>
<sequence>MGKMNVRKGDKVVVITGKDAGKRGKIIEAIPDKNKVIVEGVNVVKRHSRPTRKLPQGGIQEKEAPIDSSNVMLLCARCHKPTRVGRRILDDGTKVRVCKKCGEALQ</sequence>
<evidence type="ECO:0000255" key="1">
    <source>
        <dbReference type="HAMAP-Rule" id="MF_01326"/>
    </source>
</evidence>
<evidence type="ECO:0000305" key="2"/>
<name>RL24_DESAP</name>
<protein>
    <recommendedName>
        <fullName evidence="1">Large ribosomal subunit protein uL24</fullName>
    </recommendedName>
    <alternativeName>
        <fullName evidence="2">50S ribosomal protein L24</fullName>
    </alternativeName>
</protein>
<dbReference type="EMBL" id="CP000860">
    <property type="protein sequence ID" value="ACA58797.1"/>
    <property type="molecule type" value="Genomic_DNA"/>
</dbReference>
<dbReference type="RefSeq" id="WP_012301389.1">
    <property type="nucleotide sequence ID" value="NC_010424.1"/>
</dbReference>
<dbReference type="SMR" id="B1I1J9"/>
<dbReference type="STRING" id="477974.Daud_0236"/>
<dbReference type="KEGG" id="dau:Daud_0236"/>
<dbReference type="eggNOG" id="COG0198">
    <property type="taxonomic scope" value="Bacteria"/>
</dbReference>
<dbReference type="HOGENOM" id="CLU_093315_2_0_9"/>
<dbReference type="OrthoDB" id="9807419at2"/>
<dbReference type="Proteomes" id="UP000008544">
    <property type="component" value="Chromosome"/>
</dbReference>
<dbReference type="GO" id="GO:1990904">
    <property type="term" value="C:ribonucleoprotein complex"/>
    <property type="evidence" value="ECO:0007669"/>
    <property type="project" value="UniProtKB-KW"/>
</dbReference>
<dbReference type="GO" id="GO:0005840">
    <property type="term" value="C:ribosome"/>
    <property type="evidence" value="ECO:0007669"/>
    <property type="project" value="UniProtKB-KW"/>
</dbReference>
<dbReference type="GO" id="GO:0019843">
    <property type="term" value="F:rRNA binding"/>
    <property type="evidence" value="ECO:0007669"/>
    <property type="project" value="UniProtKB-UniRule"/>
</dbReference>
<dbReference type="GO" id="GO:0003735">
    <property type="term" value="F:structural constituent of ribosome"/>
    <property type="evidence" value="ECO:0007669"/>
    <property type="project" value="InterPro"/>
</dbReference>
<dbReference type="GO" id="GO:0006412">
    <property type="term" value="P:translation"/>
    <property type="evidence" value="ECO:0007669"/>
    <property type="project" value="UniProtKB-UniRule"/>
</dbReference>
<dbReference type="CDD" id="cd06089">
    <property type="entry name" value="KOW_RPL26"/>
    <property type="match status" value="1"/>
</dbReference>
<dbReference type="FunFam" id="2.30.30.30:FF:000004">
    <property type="entry name" value="50S ribosomal protein L24"/>
    <property type="match status" value="1"/>
</dbReference>
<dbReference type="Gene3D" id="2.30.30.30">
    <property type="match status" value="1"/>
</dbReference>
<dbReference type="HAMAP" id="MF_01326_B">
    <property type="entry name" value="Ribosomal_uL24_B"/>
    <property type="match status" value="1"/>
</dbReference>
<dbReference type="InterPro" id="IPR005824">
    <property type="entry name" value="KOW"/>
</dbReference>
<dbReference type="InterPro" id="IPR014722">
    <property type="entry name" value="Rib_uL2_dom2"/>
</dbReference>
<dbReference type="InterPro" id="IPR003256">
    <property type="entry name" value="Ribosomal_uL24"/>
</dbReference>
<dbReference type="InterPro" id="IPR005825">
    <property type="entry name" value="Ribosomal_uL24_CS"/>
</dbReference>
<dbReference type="InterPro" id="IPR041988">
    <property type="entry name" value="Ribosomal_uL24_KOW"/>
</dbReference>
<dbReference type="InterPro" id="IPR008991">
    <property type="entry name" value="Translation_prot_SH3-like_sf"/>
</dbReference>
<dbReference type="NCBIfam" id="TIGR01079">
    <property type="entry name" value="rplX_bact"/>
    <property type="match status" value="1"/>
</dbReference>
<dbReference type="PANTHER" id="PTHR12903">
    <property type="entry name" value="MITOCHONDRIAL RIBOSOMAL PROTEIN L24"/>
    <property type="match status" value="1"/>
</dbReference>
<dbReference type="Pfam" id="PF00467">
    <property type="entry name" value="KOW"/>
    <property type="match status" value="1"/>
</dbReference>
<dbReference type="Pfam" id="PF17136">
    <property type="entry name" value="ribosomal_L24"/>
    <property type="match status" value="1"/>
</dbReference>
<dbReference type="SMART" id="SM00739">
    <property type="entry name" value="KOW"/>
    <property type="match status" value="1"/>
</dbReference>
<dbReference type="SUPFAM" id="SSF50104">
    <property type="entry name" value="Translation proteins SH3-like domain"/>
    <property type="match status" value="1"/>
</dbReference>
<dbReference type="PROSITE" id="PS01108">
    <property type="entry name" value="RIBOSOMAL_L24"/>
    <property type="match status" value="1"/>
</dbReference>
<keyword id="KW-1185">Reference proteome</keyword>
<keyword id="KW-0687">Ribonucleoprotein</keyword>
<keyword id="KW-0689">Ribosomal protein</keyword>
<keyword id="KW-0694">RNA-binding</keyword>
<keyword id="KW-0699">rRNA-binding</keyword>
<feature type="chain" id="PRO_0000355676" description="Large ribosomal subunit protein uL24">
    <location>
        <begin position="1"/>
        <end position="106"/>
    </location>
</feature>
<accession>B1I1J9</accession>
<proteinExistence type="inferred from homology"/>
<reference key="1">
    <citation type="submission" date="2007-10" db="EMBL/GenBank/DDBJ databases">
        <title>Complete sequence of chromosome of Desulforudis audaxviator MP104C.</title>
        <authorList>
            <person name="Copeland A."/>
            <person name="Lucas S."/>
            <person name="Lapidus A."/>
            <person name="Barry K."/>
            <person name="Glavina del Rio T."/>
            <person name="Dalin E."/>
            <person name="Tice H."/>
            <person name="Bruce D."/>
            <person name="Pitluck S."/>
            <person name="Lowry S.R."/>
            <person name="Larimer F."/>
            <person name="Land M.L."/>
            <person name="Hauser L."/>
            <person name="Kyrpides N."/>
            <person name="Ivanova N.N."/>
            <person name="Richardson P."/>
        </authorList>
    </citation>
    <scope>NUCLEOTIDE SEQUENCE [LARGE SCALE GENOMIC DNA]</scope>
    <source>
        <strain>MP104C</strain>
    </source>
</reference>